<sequence>MKVRPSVKPICEYCKVIRRNGRVMVICPANPKHKQRQG</sequence>
<name>RL36_LACLC</name>
<feature type="chain" id="PRO_0000126198" description="Large ribosomal subunit protein bL36">
    <location>
        <begin position="1"/>
        <end position="38"/>
    </location>
</feature>
<evidence type="ECO:0000305" key="1"/>
<organism>
    <name type="scientific">Lactococcus lactis subsp. cremoris</name>
    <name type="common">Streptococcus cremoris</name>
    <dbReference type="NCBI Taxonomy" id="1359"/>
    <lineage>
        <taxon>Bacteria</taxon>
        <taxon>Bacillati</taxon>
        <taxon>Bacillota</taxon>
        <taxon>Bacilli</taxon>
        <taxon>Lactobacillales</taxon>
        <taxon>Streptococcaceae</taxon>
        <taxon>Lactococcus</taxon>
    </lineage>
</organism>
<reference key="1">
    <citation type="journal article" date="1991" name="J. Gen. Microbiol.">
        <title>Nucleotide sequence of a Lactococcus lactis gene cluster encoding adenylate kinase, initiation factor 1 and ribosomal proteins.</title>
        <authorList>
            <person name="Koivula T."/>
            <person name="Hemilae H."/>
        </authorList>
    </citation>
    <scope>NUCLEOTIDE SEQUENCE [GENOMIC DNA]</scope>
    <source>
        <strain>MG1614</strain>
    </source>
</reference>
<reference key="2">
    <citation type="journal article" date="1991" name="FEBS Lett.">
        <title>Nucleotide sequence of the secY gene from Lactococcus lactis and identification of conserved regions by comparison of four SecY proteins.</title>
        <authorList>
            <person name="Koivula T."/>
            <person name="Palva I."/>
            <person name="Hemilae H."/>
        </authorList>
    </citation>
    <scope>NUCLEOTIDE SEQUENCE [GENOMIC DNA]</scope>
    <source>
        <strain>MG1614</strain>
    </source>
</reference>
<comment type="similarity">
    <text evidence="1">Belongs to the bacterial ribosomal protein bL36 family.</text>
</comment>
<keyword id="KW-0687">Ribonucleoprotein</keyword>
<keyword id="KW-0689">Ribosomal protein</keyword>
<accession>P0A494</accession>
<accession>P27146</accession>
<gene>
    <name type="primary">rpmJ</name>
</gene>
<protein>
    <recommendedName>
        <fullName evidence="1">Large ribosomal subunit protein bL36</fullName>
    </recommendedName>
    <alternativeName>
        <fullName>50S ribosomal protein L36</fullName>
    </alternativeName>
</protein>
<dbReference type="EMBL" id="X59250">
    <property type="protein sequence ID" value="CAA41942.1"/>
    <property type="molecule type" value="Genomic_DNA"/>
</dbReference>
<dbReference type="PIR" id="S17989">
    <property type="entry name" value="S17989"/>
</dbReference>
<dbReference type="RefSeq" id="WP_001808836.1">
    <property type="nucleotide sequence ID" value="NZ_WJUX01000016.1"/>
</dbReference>
<dbReference type="SMR" id="P0A494"/>
<dbReference type="GeneID" id="93964224"/>
<dbReference type="GO" id="GO:0005737">
    <property type="term" value="C:cytoplasm"/>
    <property type="evidence" value="ECO:0007669"/>
    <property type="project" value="UniProtKB-ARBA"/>
</dbReference>
<dbReference type="GO" id="GO:1990904">
    <property type="term" value="C:ribonucleoprotein complex"/>
    <property type="evidence" value="ECO:0007669"/>
    <property type="project" value="UniProtKB-KW"/>
</dbReference>
<dbReference type="GO" id="GO:0005840">
    <property type="term" value="C:ribosome"/>
    <property type="evidence" value="ECO:0007669"/>
    <property type="project" value="UniProtKB-KW"/>
</dbReference>
<dbReference type="GO" id="GO:0003735">
    <property type="term" value="F:structural constituent of ribosome"/>
    <property type="evidence" value="ECO:0007669"/>
    <property type="project" value="InterPro"/>
</dbReference>
<dbReference type="GO" id="GO:0006412">
    <property type="term" value="P:translation"/>
    <property type="evidence" value="ECO:0007669"/>
    <property type="project" value="UniProtKB-UniRule"/>
</dbReference>
<dbReference type="HAMAP" id="MF_00251">
    <property type="entry name" value="Ribosomal_bL36"/>
    <property type="match status" value="1"/>
</dbReference>
<dbReference type="InterPro" id="IPR000473">
    <property type="entry name" value="Ribosomal_bL36"/>
</dbReference>
<dbReference type="InterPro" id="IPR035977">
    <property type="entry name" value="Ribosomal_bL36_sp"/>
</dbReference>
<dbReference type="NCBIfam" id="TIGR01022">
    <property type="entry name" value="rpmJ_bact"/>
    <property type="match status" value="1"/>
</dbReference>
<dbReference type="PANTHER" id="PTHR42888">
    <property type="entry name" value="50S RIBOSOMAL PROTEIN L36, CHLOROPLASTIC"/>
    <property type="match status" value="1"/>
</dbReference>
<dbReference type="PANTHER" id="PTHR42888:SF1">
    <property type="entry name" value="LARGE RIBOSOMAL SUBUNIT PROTEIN BL36C"/>
    <property type="match status" value="1"/>
</dbReference>
<dbReference type="Pfam" id="PF00444">
    <property type="entry name" value="Ribosomal_L36"/>
    <property type="match status" value="1"/>
</dbReference>
<dbReference type="SUPFAM" id="SSF57840">
    <property type="entry name" value="Ribosomal protein L36"/>
    <property type="match status" value="1"/>
</dbReference>
<dbReference type="PROSITE" id="PS00828">
    <property type="entry name" value="RIBOSOMAL_L36"/>
    <property type="match status" value="1"/>
</dbReference>
<proteinExistence type="inferred from homology"/>